<gene>
    <name evidence="12" type="primary">Kcnh3</name>
    <name type="synonym">Elk2</name>
</gene>
<accession>O89047</accession>
<feature type="chain" id="PRO_0000054007" description="Voltage-gated inwardly rectifying potassium channel KCNH3">
    <location>
        <begin position="1"/>
        <end position="1087"/>
    </location>
</feature>
<feature type="topological domain" description="Cytoplasmic" evidence="3">
    <location>
        <begin position="1"/>
        <end position="228"/>
    </location>
</feature>
<feature type="transmembrane region" description="Helical; Name=Segment S1" evidence="3">
    <location>
        <begin position="229"/>
        <end position="249"/>
    </location>
</feature>
<feature type="topological domain" description="Extracellular" evidence="3">
    <location>
        <begin position="250"/>
        <end position="259"/>
    </location>
</feature>
<feature type="transmembrane region" description="Helical; Name=Segment S2" evidence="3">
    <location>
        <begin position="260"/>
        <end position="280"/>
    </location>
</feature>
<feature type="topological domain" description="Cytoplasmic" evidence="3">
    <location>
        <begin position="281"/>
        <end position="302"/>
    </location>
</feature>
<feature type="transmembrane region" description="Helical; Name=Segment S3" evidence="3">
    <location>
        <begin position="303"/>
        <end position="323"/>
    </location>
</feature>
<feature type="topological domain" description="Extracellular" evidence="3">
    <location>
        <begin position="324"/>
        <end position="331"/>
    </location>
</feature>
<feature type="transmembrane region" description="Helical; Voltage-sensor; Name=Segment S4" evidence="3">
    <location>
        <begin position="332"/>
        <end position="352"/>
    </location>
</feature>
<feature type="topological domain" description="Cytoplasmic" evidence="3">
    <location>
        <begin position="353"/>
        <end position="361"/>
    </location>
</feature>
<feature type="transmembrane region" description="Helical; Name=Segment S5" evidence="3">
    <location>
        <begin position="362"/>
        <end position="382"/>
    </location>
</feature>
<feature type="topological domain" description="Extracellular" evidence="3">
    <location>
        <begin position="383"/>
        <end position="456"/>
    </location>
</feature>
<feature type="intramembrane region" description="Pore-forming; Name=Segment H5" evidence="3">
    <location>
        <begin position="457"/>
        <end position="477"/>
    </location>
</feature>
<feature type="topological domain" description="Extracellular" evidence="3">
    <location>
        <begin position="478"/>
        <end position="482"/>
    </location>
</feature>
<feature type="transmembrane region" description="Helical; Name=Segment S6" evidence="3">
    <location>
        <begin position="483"/>
        <end position="503"/>
    </location>
</feature>
<feature type="topological domain" description="Cytoplasmic" evidence="3">
    <location>
        <begin position="504"/>
        <end position="1087"/>
    </location>
</feature>
<feature type="domain" description="PAS" evidence="4">
    <location>
        <begin position="18"/>
        <end position="90"/>
    </location>
</feature>
<feature type="domain" description="PAC" evidence="5">
    <location>
        <begin position="93"/>
        <end position="145"/>
    </location>
</feature>
<feature type="region of interest" description="Disordered" evidence="6">
    <location>
        <begin position="137"/>
        <end position="161"/>
    </location>
</feature>
<feature type="region of interest" description="Disordered" evidence="6">
    <location>
        <begin position="416"/>
        <end position="436"/>
    </location>
</feature>
<feature type="region of interest" description="Disordered" evidence="6">
    <location>
        <begin position="733"/>
        <end position="813"/>
    </location>
</feature>
<feature type="region of interest" description="Disordered" evidence="6">
    <location>
        <begin position="975"/>
        <end position="1061"/>
    </location>
</feature>
<feature type="short sequence motif" description="Selectivity filter" evidence="1">
    <location>
        <begin position="468"/>
        <end position="473"/>
    </location>
</feature>
<feature type="compositionally biased region" description="Basic and acidic residues" evidence="6">
    <location>
        <begin position="137"/>
        <end position="150"/>
    </location>
</feature>
<feature type="compositionally biased region" description="Low complexity" evidence="6">
    <location>
        <begin position="419"/>
        <end position="431"/>
    </location>
</feature>
<feature type="compositionally biased region" description="Basic residues" evidence="6">
    <location>
        <begin position="776"/>
        <end position="788"/>
    </location>
</feature>
<feature type="binding site">
    <location>
        <begin position="585"/>
        <end position="700"/>
    </location>
    <ligand>
        <name>a nucleoside 3',5'-cyclic phosphate</name>
        <dbReference type="ChEBI" id="CHEBI:58464"/>
    </ligand>
</feature>
<feature type="glycosylation site" description="N-linked (GlcNAc...) asparagine" evidence="3">
    <location>
        <position position="421"/>
    </location>
</feature>
<feature type="glycosylation site" description="N-linked (GlcNAc...) asparagine" evidence="3">
    <location>
        <position position="428"/>
    </location>
</feature>
<feature type="glycosylation site" description="N-linked (GlcNAc...) asparagine" evidence="3">
    <location>
        <position position="439"/>
    </location>
</feature>
<comment type="function">
    <text evidence="9">Pore-forming (alpha) subunit of a voltage-gated inwardly rectifying potassium channel (PubMed:9824707). Charactherized by a fast rate of activation during depolarization followed by a rapid inactivation at much more depolarized value causing inward rectification due to a C-type inactivation mechanism (PubMed:9824707). Exhibits a rapid recovery from inactivation (PubMed:9824707).</text>
</comment>
<comment type="catalytic activity">
    <reaction evidence="9">
        <text>K(+)(in) = K(+)(out)</text>
        <dbReference type="Rhea" id="RHEA:29463"/>
        <dbReference type="ChEBI" id="CHEBI:29103"/>
    </reaction>
</comment>
<comment type="subunit">
    <text evidence="2">The potassium channel is probably composed of a homo- or heterotetrameric complex of pore-forming alpha subunits that can associate with modulating beta subunits. Interacts with KCNE1 and KCNE3; these interactions regulate KCNH3 trafficking to the plasma membrane and its subsequent voltage-gated potassium channel activity.</text>
</comment>
<comment type="subcellular location">
    <subcellularLocation>
        <location evidence="2">Cell membrane</location>
        <topology evidence="2">Multi-pass membrane protein</topology>
    </subcellularLocation>
    <text evidence="2">Expression on the cell membrane requires at least one of the three glycosylation sites to carry a sugar chain irrespective of their positions.</text>
</comment>
<comment type="tissue specificity">
    <text evidence="7 8 9">Highly expressed in adult and embryonic brain, in particular in cerebellum, brain stem, hippocampus, cortex and striatum (PubMed:10718922, PubMed:9824707). Also found in pituitary (PubMed:10455180).</text>
</comment>
<comment type="PTM">
    <text evidence="2">N-glycosylated. N-glycosylation mediates traffick to the cell membrane but is not necessary for voltage-gated potassium channel activity.</text>
</comment>
<comment type="similarity">
    <text evidence="11">Belongs to the potassium channel family. H (Eag) (TC 1.A.1.20) subfamily. Kv12.2/KCNH3 sub-subfamily.</text>
</comment>
<evidence type="ECO:0000250" key="1"/>
<evidence type="ECO:0000250" key="2">
    <source>
        <dbReference type="UniProtKB" id="Q9WVJ0"/>
    </source>
</evidence>
<evidence type="ECO:0000255" key="3"/>
<evidence type="ECO:0000255" key="4">
    <source>
        <dbReference type="PROSITE-ProRule" id="PRU00140"/>
    </source>
</evidence>
<evidence type="ECO:0000255" key="5">
    <source>
        <dbReference type="PROSITE-ProRule" id="PRU00141"/>
    </source>
</evidence>
<evidence type="ECO:0000256" key="6">
    <source>
        <dbReference type="SAM" id="MobiDB-lite"/>
    </source>
</evidence>
<evidence type="ECO:0000269" key="7">
    <source>
    </source>
</evidence>
<evidence type="ECO:0000269" key="8">
    <source>
    </source>
</evidence>
<evidence type="ECO:0000269" key="9">
    <source>
    </source>
</evidence>
<evidence type="ECO:0000303" key="10">
    <source>
    </source>
</evidence>
<evidence type="ECO:0000305" key="11"/>
<evidence type="ECO:0000312" key="12">
    <source>
        <dbReference type="RGD" id="71070"/>
    </source>
</evidence>
<proteinExistence type="evidence at protein level"/>
<dbReference type="EMBL" id="AJ007627">
    <property type="protein sequence ID" value="CAA07586.1"/>
    <property type="molecule type" value="mRNA"/>
</dbReference>
<dbReference type="EMBL" id="AB022697">
    <property type="protein sequence ID" value="BAA83591.1"/>
    <property type="molecule type" value="mRNA"/>
</dbReference>
<dbReference type="EMBL" id="AF073892">
    <property type="protein sequence ID" value="AAC61522.1"/>
    <property type="molecule type" value="mRNA"/>
</dbReference>
<dbReference type="PIR" id="T31100">
    <property type="entry name" value="T31100"/>
</dbReference>
<dbReference type="RefSeq" id="NP_058804.1">
    <property type="nucleotide sequence ID" value="NM_017108.1"/>
</dbReference>
<dbReference type="SMR" id="O89047"/>
<dbReference type="FunCoup" id="O89047">
    <property type="interactions" value="348"/>
</dbReference>
<dbReference type="STRING" id="10116.ENSRNOP00000071001"/>
<dbReference type="GlyCosmos" id="O89047">
    <property type="glycosylation" value="3 sites, No reported glycans"/>
</dbReference>
<dbReference type="GlyGen" id="O89047">
    <property type="glycosylation" value="5 sites"/>
</dbReference>
<dbReference type="PhosphoSitePlus" id="O89047"/>
<dbReference type="PaxDb" id="10116-ENSRNOP00000047211"/>
<dbReference type="Ensembl" id="ENSRNOT00000086611.2">
    <property type="protein sequence ID" value="ENSRNOP00000071001.1"/>
    <property type="gene ID" value="ENSRNOG00000057315.2"/>
</dbReference>
<dbReference type="GeneID" id="27150"/>
<dbReference type="KEGG" id="rno:27150"/>
<dbReference type="UCSC" id="RGD:71070">
    <property type="organism name" value="rat"/>
</dbReference>
<dbReference type="AGR" id="RGD:71070"/>
<dbReference type="CTD" id="23416"/>
<dbReference type="RGD" id="71070">
    <property type="gene designation" value="Kcnh3"/>
</dbReference>
<dbReference type="eggNOG" id="KOG0498">
    <property type="taxonomic scope" value="Eukaryota"/>
</dbReference>
<dbReference type="GeneTree" id="ENSGT00940000161742"/>
<dbReference type="HOGENOM" id="CLU_005746_6_0_1"/>
<dbReference type="InParanoid" id="O89047"/>
<dbReference type="OMA" id="YIGQQEI"/>
<dbReference type="OrthoDB" id="426293at2759"/>
<dbReference type="PhylomeDB" id="O89047"/>
<dbReference type="TreeFam" id="TF313130"/>
<dbReference type="Reactome" id="R-RNO-1296072">
    <property type="pathway name" value="Voltage gated Potassium channels"/>
</dbReference>
<dbReference type="PRO" id="PR:O89047"/>
<dbReference type="Proteomes" id="UP000002494">
    <property type="component" value="Chromosome 7"/>
</dbReference>
<dbReference type="Bgee" id="ENSRNOG00000057315">
    <property type="expression patterns" value="Expressed in frontal cortex and 8 other cell types or tissues"/>
</dbReference>
<dbReference type="GO" id="GO:0034702">
    <property type="term" value="C:monoatomic ion channel complex"/>
    <property type="evidence" value="ECO:0007669"/>
    <property type="project" value="UniProtKB-KW"/>
</dbReference>
<dbReference type="GO" id="GO:0005886">
    <property type="term" value="C:plasma membrane"/>
    <property type="evidence" value="ECO:0000266"/>
    <property type="project" value="RGD"/>
</dbReference>
<dbReference type="GO" id="GO:0005242">
    <property type="term" value="F:inward rectifier potassium channel activity"/>
    <property type="evidence" value="ECO:0000314"/>
    <property type="project" value="UniProtKB"/>
</dbReference>
<dbReference type="GO" id="GO:0005249">
    <property type="term" value="F:voltage-gated potassium channel activity"/>
    <property type="evidence" value="ECO:0000318"/>
    <property type="project" value="GO_Central"/>
</dbReference>
<dbReference type="GO" id="GO:0071805">
    <property type="term" value="P:potassium ion transmembrane transport"/>
    <property type="evidence" value="ECO:0000318"/>
    <property type="project" value="GO_Central"/>
</dbReference>
<dbReference type="GO" id="GO:0006813">
    <property type="term" value="P:potassium ion transport"/>
    <property type="evidence" value="ECO:0000314"/>
    <property type="project" value="UniProtKB"/>
</dbReference>
<dbReference type="GO" id="GO:0042391">
    <property type="term" value="P:regulation of membrane potential"/>
    <property type="evidence" value="ECO:0000318"/>
    <property type="project" value="GO_Central"/>
</dbReference>
<dbReference type="CDD" id="cd00038">
    <property type="entry name" value="CAP_ED"/>
    <property type="match status" value="1"/>
</dbReference>
<dbReference type="CDD" id="cd00130">
    <property type="entry name" value="PAS"/>
    <property type="match status" value="1"/>
</dbReference>
<dbReference type="FunFam" id="2.60.120.10:FF:000061">
    <property type="entry name" value="Potassium voltage-gated channel subfamily H member 3"/>
    <property type="match status" value="1"/>
</dbReference>
<dbReference type="FunFam" id="3.30.450.20:FF:000001">
    <property type="entry name" value="Potassium voltage-gated channel subfamily H member 7"/>
    <property type="match status" value="1"/>
</dbReference>
<dbReference type="FunFam" id="1.10.1200.260:FF:000002">
    <property type="entry name" value="Potassium voltage-gated channel subfamily H member 8"/>
    <property type="match status" value="1"/>
</dbReference>
<dbReference type="Gene3D" id="1.10.1200.260">
    <property type="match status" value="1"/>
</dbReference>
<dbReference type="Gene3D" id="1.10.287.70">
    <property type="match status" value="1"/>
</dbReference>
<dbReference type="Gene3D" id="2.60.120.10">
    <property type="entry name" value="Jelly Rolls"/>
    <property type="match status" value="1"/>
</dbReference>
<dbReference type="Gene3D" id="3.30.450.20">
    <property type="entry name" value="PAS domain"/>
    <property type="match status" value="1"/>
</dbReference>
<dbReference type="InterPro" id="IPR000595">
    <property type="entry name" value="cNMP-bd_dom"/>
</dbReference>
<dbReference type="InterPro" id="IPR018490">
    <property type="entry name" value="cNMP-bd_dom_sf"/>
</dbReference>
<dbReference type="InterPro" id="IPR005821">
    <property type="entry name" value="Ion_trans_dom"/>
</dbReference>
<dbReference type="InterPro" id="IPR003938">
    <property type="entry name" value="K_chnl_volt-dep_EAG/ELK/ERG"/>
</dbReference>
<dbReference type="InterPro" id="IPR003950">
    <property type="entry name" value="K_chnl_volt-dep_ELK"/>
</dbReference>
<dbReference type="InterPro" id="IPR050818">
    <property type="entry name" value="KCNH_animal-type"/>
</dbReference>
<dbReference type="InterPro" id="IPR001610">
    <property type="entry name" value="PAC"/>
</dbReference>
<dbReference type="InterPro" id="IPR000014">
    <property type="entry name" value="PAS"/>
</dbReference>
<dbReference type="InterPro" id="IPR000700">
    <property type="entry name" value="PAS-assoc_C"/>
</dbReference>
<dbReference type="InterPro" id="IPR035965">
    <property type="entry name" value="PAS-like_dom_sf"/>
</dbReference>
<dbReference type="InterPro" id="IPR014710">
    <property type="entry name" value="RmlC-like_jellyroll"/>
</dbReference>
<dbReference type="NCBIfam" id="TIGR00229">
    <property type="entry name" value="sensory_box"/>
    <property type="match status" value="1"/>
</dbReference>
<dbReference type="PANTHER" id="PTHR10217:SF481">
    <property type="entry name" value="POTASSIUM VOLTAGE-GATED CHANNEL SUBFAMILY H MEMBER 3"/>
    <property type="match status" value="1"/>
</dbReference>
<dbReference type="PANTHER" id="PTHR10217">
    <property type="entry name" value="VOLTAGE AND LIGAND GATED POTASSIUM CHANNEL"/>
    <property type="match status" value="1"/>
</dbReference>
<dbReference type="Pfam" id="PF00027">
    <property type="entry name" value="cNMP_binding"/>
    <property type="match status" value="1"/>
</dbReference>
<dbReference type="Pfam" id="PF00520">
    <property type="entry name" value="Ion_trans"/>
    <property type="match status" value="1"/>
</dbReference>
<dbReference type="Pfam" id="PF13426">
    <property type="entry name" value="PAS_9"/>
    <property type="match status" value="1"/>
</dbReference>
<dbReference type="PRINTS" id="PR01463">
    <property type="entry name" value="EAGCHANLFMLY"/>
</dbReference>
<dbReference type="PRINTS" id="PR01465">
    <property type="entry name" value="ELKCHANNEL"/>
</dbReference>
<dbReference type="SMART" id="SM00100">
    <property type="entry name" value="cNMP"/>
    <property type="match status" value="1"/>
</dbReference>
<dbReference type="SMART" id="SM00086">
    <property type="entry name" value="PAC"/>
    <property type="match status" value="1"/>
</dbReference>
<dbReference type="SUPFAM" id="SSF51206">
    <property type="entry name" value="cAMP-binding domain-like"/>
    <property type="match status" value="1"/>
</dbReference>
<dbReference type="SUPFAM" id="SSF55785">
    <property type="entry name" value="PYP-like sensor domain (PAS domain)"/>
    <property type="match status" value="1"/>
</dbReference>
<dbReference type="SUPFAM" id="SSF81324">
    <property type="entry name" value="Voltage-gated potassium channels"/>
    <property type="match status" value="1"/>
</dbReference>
<dbReference type="PROSITE" id="PS50042">
    <property type="entry name" value="CNMP_BINDING_3"/>
    <property type="match status" value="1"/>
</dbReference>
<dbReference type="PROSITE" id="PS50113">
    <property type="entry name" value="PAC"/>
    <property type="match status" value="1"/>
</dbReference>
<dbReference type="PROSITE" id="PS50112">
    <property type="entry name" value="PAS"/>
    <property type="match status" value="1"/>
</dbReference>
<protein>
    <recommendedName>
        <fullName evidence="11">Voltage-gated inwardly rectifying potassium channel KCNH3</fullName>
    </recommendedName>
    <alternativeName>
        <fullName>Brain-specific eag-like channel 1</fullName>
        <shortName>BEC1</shortName>
    </alternativeName>
    <alternativeName>
        <fullName>Ether-a-go-go-like potassium channel 2</fullName>
        <shortName>ELK channel 2</shortName>
        <shortName evidence="10">rElk2</shortName>
    </alternativeName>
    <alternativeName>
        <fullName>Potassium voltage-gated channel subfamily H member 3</fullName>
    </alternativeName>
    <alternativeName>
        <fullName>Voltage-gated potassium channel subunit Kv12.2</fullName>
    </alternativeName>
</protein>
<reference key="1">
    <citation type="journal article" date="1998" name="J. Physiol. (Lond.)">
        <title>Cloning and functional expression of rat ether-a-go-go-like K+ channel genes.</title>
        <authorList>
            <person name="Engeland B."/>
            <person name="Neu A."/>
            <person name="Ludwig J."/>
            <person name="Roeper J."/>
            <person name="Pongs O."/>
        </authorList>
    </citation>
    <scope>NUCLEOTIDE SEQUENCE [MRNA]</scope>
    <scope>FUNCTION</scope>
    <scope>TRANSPORTER ACTIVITY</scope>
    <scope>IDENTIFICATION BY MASS SPECTROMETRY</scope>
    <source>
        <tissue>Brain cortex</tissue>
    </source>
</reference>
<reference key="2">
    <citation type="journal article" date="1999" name="J. Biol. Chem.">
        <title>New ether-a-go-go K+ channel family members localized in human telencephalon.</title>
        <authorList>
            <person name="Miyake A."/>
            <person name="Mochizuki S."/>
            <person name="Yokoi H."/>
            <person name="Kohda M."/>
            <person name="Furuichi K."/>
        </authorList>
    </citation>
    <scope>NUCLEOTIDE SEQUENCE [MRNA]</scope>
    <scope>TISSUE SPECIFICITY</scope>
    <source>
        <tissue>Brain</tissue>
    </source>
</reference>
<reference key="3">
    <citation type="journal article" date="1998" name="J. Physiol. (Lond.)">
        <title>Cloning of a mammalian elk potassium channel gene and EAG mRNA distribution in rat sympathetic ganglia.</title>
        <authorList>
            <person name="Shi W."/>
            <person name="Wang H.-S."/>
            <person name="Pan Z."/>
            <person name="Wymore R.S."/>
            <person name="Cohen I.S."/>
            <person name="McKinnon D."/>
            <person name="Dixon J.E."/>
        </authorList>
    </citation>
    <scope>NUCLEOTIDE SEQUENCE [MRNA] OF 120-273</scope>
    <source>
        <tissue>Brain</tissue>
    </source>
</reference>
<reference key="4">
    <citation type="journal article" date="2000" name="J. Neuroendocrinol.">
        <title>Expression of mRNA for voltage-dependent and inward-rectifying K channels in GH3/B6 cells and rat pituitary.</title>
        <authorList>
            <person name="Wulfsen I."/>
            <person name="Hauber H.-P."/>
            <person name="Schiemann D."/>
            <person name="Bauer C.K."/>
            <person name="Schwarz J.R."/>
        </authorList>
    </citation>
    <scope>TISSUE SPECIFICITY</scope>
</reference>
<keyword id="KW-1003">Cell membrane</keyword>
<keyword id="KW-0325">Glycoprotein</keyword>
<keyword id="KW-0407">Ion channel</keyword>
<keyword id="KW-0406">Ion transport</keyword>
<keyword id="KW-0472">Membrane</keyword>
<keyword id="KW-0630">Potassium</keyword>
<keyword id="KW-0631">Potassium channel</keyword>
<keyword id="KW-0633">Potassium transport</keyword>
<keyword id="KW-1185">Reference proteome</keyword>
<keyword id="KW-0812">Transmembrane</keyword>
<keyword id="KW-1133">Transmembrane helix</keyword>
<keyword id="KW-0813">Transport</keyword>
<keyword id="KW-0851">Voltage-gated channel</keyword>
<name>KCNH3_RAT</name>
<organism>
    <name type="scientific">Rattus norvegicus</name>
    <name type="common">Rat</name>
    <dbReference type="NCBI Taxonomy" id="10116"/>
    <lineage>
        <taxon>Eukaryota</taxon>
        <taxon>Metazoa</taxon>
        <taxon>Chordata</taxon>
        <taxon>Craniata</taxon>
        <taxon>Vertebrata</taxon>
        <taxon>Euteleostomi</taxon>
        <taxon>Mammalia</taxon>
        <taxon>Eutheria</taxon>
        <taxon>Euarchontoglires</taxon>
        <taxon>Glires</taxon>
        <taxon>Rodentia</taxon>
        <taxon>Myomorpha</taxon>
        <taxon>Muroidea</taxon>
        <taxon>Muridae</taxon>
        <taxon>Murinae</taxon>
        <taxon>Rattus</taxon>
    </lineage>
</organism>
<sequence length="1087" mass="117580">MPAMRGLLAPQNTFLDTIATRFDGTHSNFVLGNAQVAGLFPVVYCSDGFCDLTGFSRAEVMQRGCACSFLYGPDTSELVRQQIRKALDEHKEFKAELILYRKSGLPFWCLLDVIPIKNEKGEVALFLVSHKDISETKNRGGPDNWKERGGGRRRYGRAGSKGFNANRRRSRAVLYHLSGHLQKQPKGKHKLNKGVFGEKPNLPEYKVAAIRKSPFILLHCGALRATWDGFILLATLYVAVTVPYSVCVSTAREPSAARGPPSVCDLAVEVLFILDIVLNFRTTFVSKSGQVVFAPKSICLHYVTTWFLLDVIAALPFDLLHAFKVNVYVGAHLLKTVRLLRLLRLLPRLDRYSQYSAVVLTLLMAVFALLAHWVACVWFYIGQQEIENSESELPEIGWLQELARRLETPYYLVSRSPDGGNSSGQSENCSSSGGGSEANGTGLELLGGPSLRSAYITSLYFALSSLTSVGFGNVSANTDTEKIFSICTMLIGALMHAVVFGNVTAIIQRMYARRFLYHSRTRDLRDYIRIHRIPKPLKQRMLEYFQATWAVNNGIDTTELLQSLPDELRADIAMHLHKEVLQLPLFEAASRGCLRALSLALRPAFCTPGEYLIHQGDALQALYFVCSGSMEVLKGGTVLAILGKGDLIGCELPQREQVVKANADVKGLTYCVLQCLQLAGLHESLALYPEFAPRFSRGLRGELSYNLGAGGVSAEVDTSSLSGDNTLMSTLEEKETDGEQGHTISPAPADEPSSPLLSPGCTSSSSAAKLLSPRRTAPRPRLGGRGRPSRAGVLKPEAGPSAHPRTLDGLQLPPMPWNVPPDLSPRVVDGIEDGCGSDQHKFSFRVGQSGPECSSSPSPGTESGLLTVPLVPSEARNTDTLDKLRQAVTELSEQVLQMREGLQSLRQAVQLILVPQGEGQCPRVSGEGPCPATASGLLQPLRVDTGASSYCLQPPAGSVLSGTWPHPRPGHPPPLMAPWPWGPPASQSSPWPRATALWTSTSDSEPPGSGDLCSEPSTPASPPPPEEGARTGTPAPVSQAEATSTGEPPPGSGGRALPWDPHSLEMVLIGCHGPGSVQWTQEEGTGV</sequence>